<comment type="function">
    <text evidence="1">One of the essential components for the initiation of protein synthesis. Stabilizes the binding of IF-2 and IF-3 on the 30S subunit to which N-formylmethionyl-tRNA(fMet) subsequently binds. Helps modulate mRNA selection, yielding the 30S pre-initiation complex (PIC). Upon addition of the 50S ribosomal subunit IF-1, IF-2 and IF-3 are released leaving the mature 70S translation initiation complex.</text>
</comment>
<comment type="subunit">
    <text evidence="1">Component of the 30S ribosomal translation pre-initiation complex which assembles on the 30S ribosome in the order IF-2 and IF-3, IF-1 and N-formylmethionyl-tRNA(fMet); mRNA recruitment can occur at any time during PIC assembly.</text>
</comment>
<comment type="subcellular location">
    <subcellularLocation>
        <location evidence="1">Cytoplasm</location>
    </subcellularLocation>
</comment>
<comment type="similarity">
    <text evidence="1">Belongs to the IF-1 family.</text>
</comment>
<feature type="chain" id="PRO_0000263766" description="Translation initiation factor IF-1">
    <location>
        <begin position="1"/>
        <end position="72"/>
    </location>
</feature>
<feature type="domain" description="S1-like" evidence="1">
    <location>
        <begin position="1"/>
        <end position="72"/>
    </location>
</feature>
<evidence type="ECO:0000255" key="1">
    <source>
        <dbReference type="HAMAP-Rule" id="MF_00075"/>
    </source>
</evidence>
<dbReference type="EMBL" id="CP000016">
    <property type="protein sequence ID" value="AAZ41023.1"/>
    <property type="molecule type" value="Genomic_DNA"/>
</dbReference>
<dbReference type="RefSeq" id="WP_011282932.1">
    <property type="nucleotide sequence ID" value="NC_007292.1"/>
</dbReference>
<dbReference type="SMR" id="Q492S0"/>
<dbReference type="STRING" id="291272.BPEN_399"/>
<dbReference type="KEGG" id="bpn:BPEN_399"/>
<dbReference type="eggNOG" id="COG0361">
    <property type="taxonomic scope" value="Bacteria"/>
</dbReference>
<dbReference type="HOGENOM" id="CLU_151267_1_0_6"/>
<dbReference type="OrthoDB" id="9803250at2"/>
<dbReference type="Proteomes" id="UP000007794">
    <property type="component" value="Chromosome"/>
</dbReference>
<dbReference type="GO" id="GO:0005829">
    <property type="term" value="C:cytosol"/>
    <property type="evidence" value="ECO:0007669"/>
    <property type="project" value="TreeGrafter"/>
</dbReference>
<dbReference type="GO" id="GO:0043022">
    <property type="term" value="F:ribosome binding"/>
    <property type="evidence" value="ECO:0007669"/>
    <property type="project" value="UniProtKB-UniRule"/>
</dbReference>
<dbReference type="GO" id="GO:0019843">
    <property type="term" value="F:rRNA binding"/>
    <property type="evidence" value="ECO:0007669"/>
    <property type="project" value="UniProtKB-UniRule"/>
</dbReference>
<dbReference type="GO" id="GO:0003743">
    <property type="term" value="F:translation initiation factor activity"/>
    <property type="evidence" value="ECO:0007669"/>
    <property type="project" value="UniProtKB-UniRule"/>
</dbReference>
<dbReference type="CDD" id="cd04451">
    <property type="entry name" value="S1_IF1"/>
    <property type="match status" value="1"/>
</dbReference>
<dbReference type="FunFam" id="2.40.50.140:FF:000002">
    <property type="entry name" value="Translation initiation factor IF-1"/>
    <property type="match status" value="1"/>
</dbReference>
<dbReference type="Gene3D" id="2.40.50.140">
    <property type="entry name" value="Nucleic acid-binding proteins"/>
    <property type="match status" value="1"/>
</dbReference>
<dbReference type="HAMAP" id="MF_00075">
    <property type="entry name" value="IF_1"/>
    <property type="match status" value="1"/>
</dbReference>
<dbReference type="InterPro" id="IPR012340">
    <property type="entry name" value="NA-bd_OB-fold"/>
</dbReference>
<dbReference type="InterPro" id="IPR006196">
    <property type="entry name" value="RNA-binding_domain_S1_IF1"/>
</dbReference>
<dbReference type="InterPro" id="IPR003029">
    <property type="entry name" value="S1_domain"/>
</dbReference>
<dbReference type="InterPro" id="IPR004368">
    <property type="entry name" value="TIF_IF1"/>
</dbReference>
<dbReference type="NCBIfam" id="TIGR00008">
    <property type="entry name" value="infA"/>
    <property type="match status" value="1"/>
</dbReference>
<dbReference type="PANTHER" id="PTHR33370">
    <property type="entry name" value="TRANSLATION INITIATION FACTOR IF-1, CHLOROPLASTIC"/>
    <property type="match status" value="1"/>
</dbReference>
<dbReference type="PANTHER" id="PTHR33370:SF1">
    <property type="entry name" value="TRANSLATION INITIATION FACTOR IF-1, CHLOROPLASTIC"/>
    <property type="match status" value="1"/>
</dbReference>
<dbReference type="Pfam" id="PF01176">
    <property type="entry name" value="eIF-1a"/>
    <property type="match status" value="1"/>
</dbReference>
<dbReference type="SMART" id="SM00316">
    <property type="entry name" value="S1"/>
    <property type="match status" value="1"/>
</dbReference>
<dbReference type="SUPFAM" id="SSF50249">
    <property type="entry name" value="Nucleic acid-binding proteins"/>
    <property type="match status" value="1"/>
</dbReference>
<dbReference type="PROSITE" id="PS50832">
    <property type="entry name" value="S1_IF1_TYPE"/>
    <property type="match status" value="1"/>
</dbReference>
<protein>
    <recommendedName>
        <fullName evidence="1">Translation initiation factor IF-1</fullName>
    </recommendedName>
</protein>
<gene>
    <name evidence="1" type="primary">infA</name>
    <name type="ordered locus">BPEN_399</name>
</gene>
<reference key="1">
    <citation type="journal article" date="2005" name="Genome Res.">
        <title>Genome sequence of Blochmannia pennsylvanicus indicates parallel evolutionary trends among bacterial mutualists of insects.</title>
        <authorList>
            <person name="Degnan P.H."/>
            <person name="Lazarus A.B."/>
            <person name="Wernegreen J.J."/>
        </authorList>
    </citation>
    <scope>NUCLEOTIDE SEQUENCE [LARGE SCALE GENOMIC DNA]</scope>
    <source>
        <strain>BPEN</strain>
    </source>
</reference>
<proteinExistence type="inferred from homology"/>
<keyword id="KW-0963">Cytoplasm</keyword>
<keyword id="KW-0396">Initiation factor</keyword>
<keyword id="KW-0648">Protein biosynthesis</keyword>
<keyword id="KW-1185">Reference proteome</keyword>
<keyword id="KW-0694">RNA-binding</keyword>
<keyword id="KW-0699">rRNA-binding</keyword>
<name>IF1_BLOPB</name>
<sequence length="72" mass="8289">MTKEDSFEMHGTVLDTLPNTMFRVKLENGHVIVAHISGKIRKNYIRILTGDKVTVELTPYDLSKGRIIFRSR</sequence>
<organism>
    <name type="scientific">Blochmanniella pennsylvanica (strain BPEN)</name>
    <dbReference type="NCBI Taxonomy" id="291272"/>
    <lineage>
        <taxon>Bacteria</taxon>
        <taxon>Pseudomonadati</taxon>
        <taxon>Pseudomonadota</taxon>
        <taxon>Gammaproteobacteria</taxon>
        <taxon>Enterobacterales</taxon>
        <taxon>Enterobacteriaceae</taxon>
        <taxon>ant endosymbionts</taxon>
        <taxon>Candidatus Blochmanniella</taxon>
    </lineage>
</organism>
<accession>Q492S0</accession>